<name>Y2558_PSET1</name>
<protein>
    <recommendedName>
        <fullName evidence="1">UPF0246 protein PSHAa2558</fullName>
    </recommendedName>
</protein>
<reference key="1">
    <citation type="journal article" date="2005" name="Genome Res.">
        <title>Coping with cold: the genome of the versatile marine Antarctica bacterium Pseudoalteromonas haloplanktis TAC125.</title>
        <authorList>
            <person name="Medigue C."/>
            <person name="Krin E."/>
            <person name="Pascal G."/>
            <person name="Barbe V."/>
            <person name="Bernsel A."/>
            <person name="Bertin P.N."/>
            <person name="Cheung F."/>
            <person name="Cruveiller S."/>
            <person name="D'Amico S."/>
            <person name="Duilio A."/>
            <person name="Fang G."/>
            <person name="Feller G."/>
            <person name="Ho C."/>
            <person name="Mangenot S."/>
            <person name="Marino G."/>
            <person name="Nilsson J."/>
            <person name="Parrilli E."/>
            <person name="Rocha E.P.C."/>
            <person name="Rouy Z."/>
            <person name="Sekowska A."/>
            <person name="Tutino M.L."/>
            <person name="Vallenet D."/>
            <person name="von Heijne G."/>
            <person name="Danchin A."/>
        </authorList>
    </citation>
    <scope>NUCLEOTIDE SEQUENCE [LARGE SCALE GENOMIC DNA]</scope>
    <source>
        <strain>TAC 125</strain>
    </source>
</reference>
<dbReference type="EMBL" id="CR954246">
    <property type="protein sequence ID" value="CAI87606.1"/>
    <property type="molecule type" value="Genomic_DNA"/>
</dbReference>
<dbReference type="SMR" id="Q3IG50"/>
<dbReference type="STRING" id="326442.PSHAa2558"/>
<dbReference type="KEGG" id="pha:PSHAa2558"/>
<dbReference type="eggNOG" id="COG3022">
    <property type="taxonomic scope" value="Bacteria"/>
</dbReference>
<dbReference type="HOGENOM" id="CLU_061989_0_0_6"/>
<dbReference type="BioCyc" id="PHAL326442:PSHA_RS12595-MONOMER"/>
<dbReference type="Proteomes" id="UP000006843">
    <property type="component" value="Chromosome I"/>
</dbReference>
<dbReference type="GO" id="GO:0005829">
    <property type="term" value="C:cytosol"/>
    <property type="evidence" value="ECO:0007669"/>
    <property type="project" value="TreeGrafter"/>
</dbReference>
<dbReference type="GO" id="GO:0033194">
    <property type="term" value="P:response to hydroperoxide"/>
    <property type="evidence" value="ECO:0007669"/>
    <property type="project" value="TreeGrafter"/>
</dbReference>
<dbReference type="HAMAP" id="MF_00652">
    <property type="entry name" value="UPF0246"/>
    <property type="match status" value="1"/>
</dbReference>
<dbReference type="InterPro" id="IPR005583">
    <property type="entry name" value="YaaA"/>
</dbReference>
<dbReference type="NCBIfam" id="NF002541">
    <property type="entry name" value="PRK02101.1-1"/>
    <property type="match status" value="1"/>
</dbReference>
<dbReference type="NCBIfam" id="NF002542">
    <property type="entry name" value="PRK02101.1-3"/>
    <property type="match status" value="1"/>
</dbReference>
<dbReference type="PANTHER" id="PTHR30283:SF4">
    <property type="entry name" value="PEROXIDE STRESS RESISTANCE PROTEIN YAAA"/>
    <property type="match status" value="1"/>
</dbReference>
<dbReference type="PANTHER" id="PTHR30283">
    <property type="entry name" value="PEROXIDE STRESS RESPONSE PROTEIN YAAA"/>
    <property type="match status" value="1"/>
</dbReference>
<dbReference type="Pfam" id="PF03883">
    <property type="entry name" value="H2O2_YaaD"/>
    <property type="match status" value="1"/>
</dbReference>
<sequence length="259" mass="29061">MITVISPAKNLDYTTPPATDKFTQPELLEHSEALMQVCRELTPAQIGSLMKISDKLSGLNAARFSEWAQPFTTENAKQAVLAFNGDVYGGLDASTLTANQLDYAQSHLRILSGLYGLLKPLDLMQAYRLEMGTKLENSRGKNLYEFWGSVIANKLNEVLKAEDAQYLVNLASNEYFKAVDKKALNAQIITPHFKDCKNGQYKVISFYAKKARGMMARYLIENKVTQLSQLKEFTVAGYYFSAEASVKELEPVFLRDEQS</sequence>
<organism>
    <name type="scientific">Pseudoalteromonas translucida (strain TAC 125)</name>
    <dbReference type="NCBI Taxonomy" id="326442"/>
    <lineage>
        <taxon>Bacteria</taxon>
        <taxon>Pseudomonadati</taxon>
        <taxon>Pseudomonadota</taxon>
        <taxon>Gammaproteobacteria</taxon>
        <taxon>Alteromonadales</taxon>
        <taxon>Pseudoalteromonadaceae</taxon>
        <taxon>Pseudoalteromonas</taxon>
    </lineage>
</organism>
<keyword id="KW-1185">Reference proteome</keyword>
<proteinExistence type="inferred from homology"/>
<gene>
    <name type="ordered locus">PSHAa2558</name>
</gene>
<comment type="similarity">
    <text evidence="1">Belongs to the UPF0246 family.</text>
</comment>
<feature type="chain" id="PRO_0000262039" description="UPF0246 protein PSHAa2558">
    <location>
        <begin position="1"/>
        <end position="259"/>
    </location>
</feature>
<evidence type="ECO:0000255" key="1">
    <source>
        <dbReference type="HAMAP-Rule" id="MF_00652"/>
    </source>
</evidence>
<accession>Q3IG50</accession>